<evidence type="ECO:0000255" key="1">
    <source>
        <dbReference type="HAMAP-Rule" id="MF_00332"/>
    </source>
</evidence>
<evidence type="ECO:0000256" key="2">
    <source>
        <dbReference type="SAM" id="MobiDB-lite"/>
    </source>
</evidence>
<name>DNAK_KLEP3</name>
<dbReference type="EMBL" id="CP000964">
    <property type="protein sequence ID" value="ACI10875.1"/>
    <property type="molecule type" value="Genomic_DNA"/>
</dbReference>
<dbReference type="SMR" id="B5Y242"/>
<dbReference type="KEGG" id="kpe:KPK_4742"/>
<dbReference type="HOGENOM" id="CLU_005965_2_1_6"/>
<dbReference type="Proteomes" id="UP000001734">
    <property type="component" value="Chromosome"/>
</dbReference>
<dbReference type="GO" id="GO:0005524">
    <property type="term" value="F:ATP binding"/>
    <property type="evidence" value="ECO:0007669"/>
    <property type="project" value="UniProtKB-UniRule"/>
</dbReference>
<dbReference type="GO" id="GO:0140662">
    <property type="term" value="F:ATP-dependent protein folding chaperone"/>
    <property type="evidence" value="ECO:0007669"/>
    <property type="project" value="InterPro"/>
</dbReference>
<dbReference type="GO" id="GO:0051082">
    <property type="term" value="F:unfolded protein binding"/>
    <property type="evidence" value="ECO:0007669"/>
    <property type="project" value="InterPro"/>
</dbReference>
<dbReference type="CDD" id="cd10234">
    <property type="entry name" value="ASKHA_NBD_HSP70_DnaK-like"/>
    <property type="match status" value="1"/>
</dbReference>
<dbReference type="FunFam" id="2.60.34.10:FF:000014">
    <property type="entry name" value="Chaperone protein DnaK HSP70"/>
    <property type="match status" value="1"/>
</dbReference>
<dbReference type="FunFam" id="3.30.30.30:FF:000003">
    <property type="entry name" value="Heat shock protein 9"/>
    <property type="match status" value="1"/>
</dbReference>
<dbReference type="FunFam" id="1.20.1270.10:FF:000001">
    <property type="entry name" value="Molecular chaperone DnaK"/>
    <property type="match status" value="1"/>
</dbReference>
<dbReference type="FunFam" id="3.30.420.40:FF:000004">
    <property type="entry name" value="Molecular chaperone DnaK"/>
    <property type="match status" value="1"/>
</dbReference>
<dbReference type="FunFam" id="3.90.640.10:FF:000003">
    <property type="entry name" value="Molecular chaperone DnaK"/>
    <property type="match status" value="1"/>
</dbReference>
<dbReference type="Gene3D" id="1.20.1270.10">
    <property type="match status" value="1"/>
</dbReference>
<dbReference type="Gene3D" id="3.30.420.40">
    <property type="match status" value="2"/>
</dbReference>
<dbReference type="Gene3D" id="3.90.640.10">
    <property type="entry name" value="Actin, Chain A, domain 4"/>
    <property type="match status" value="1"/>
</dbReference>
<dbReference type="Gene3D" id="2.60.34.10">
    <property type="entry name" value="Substrate Binding Domain Of DNAk, Chain A, domain 1"/>
    <property type="match status" value="1"/>
</dbReference>
<dbReference type="HAMAP" id="MF_00332">
    <property type="entry name" value="DnaK"/>
    <property type="match status" value="1"/>
</dbReference>
<dbReference type="InterPro" id="IPR043129">
    <property type="entry name" value="ATPase_NBD"/>
</dbReference>
<dbReference type="InterPro" id="IPR012725">
    <property type="entry name" value="Chaperone_DnaK"/>
</dbReference>
<dbReference type="InterPro" id="IPR018181">
    <property type="entry name" value="Heat_shock_70_CS"/>
</dbReference>
<dbReference type="InterPro" id="IPR029048">
    <property type="entry name" value="HSP70_C_sf"/>
</dbReference>
<dbReference type="InterPro" id="IPR029047">
    <property type="entry name" value="HSP70_peptide-bd_sf"/>
</dbReference>
<dbReference type="InterPro" id="IPR013126">
    <property type="entry name" value="Hsp_70_fam"/>
</dbReference>
<dbReference type="NCBIfam" id="NF001413">
    <property type="entry name" value="PRK00290.1"/>
    <property type="match status" value="1"/>
</dbReference>
<dbReference type="NCBIfam" id="NF003520">
    <property type="entry name" value="PRK05183.1"/>
    <property type="match status" value="1"/>
</dbReference>
<dbReference type="NCBIfam" id="TIGR02350">
    <property type="entry name" value="prok_dnaK"/>
    <property type="match status" value="1"/>
</dbReference>
<dbReference type="PANTHER" id="PTHR19375">
    <property type="entry name" value="HEAT SHOCK PROTEIN 70KDA"/>
    <property type="match status" value="1"/>
</dbReference>
<dbReference type="Pfam" id="PF00012">
    <property type="entry name" value="HSP70"/>
    <property type="match status" value="1"/>
</dbReference>
<dbReference type="PRINTS" id="PR00301">
    <property type="entry name" value="HEATSHOCK70"/>
</dbReference>
<dbReference type="SUPFAM" id="SSF53067">
    <property type="entry name" value="Actin-like ATPase domain"/>
    <property type="match status" value="2"/>
</dbReference>
<dbReference type="SUPFAM" id="SSF100934">
    <property type="entry name" value="Heat shock protein 70kD (HSP70), C-terminal subdomain"/>
    <property type="match status" value="1"/>
</dbReference>
<dbReference type="SUPFAM" id="SSF100920">
    <property type="entry name" value="Heat shock protein 70kD (HSP70), peptide-binding domain"/>
    <property type="match status" value="1"/>
</dbReference>
<dbReference type="PROSITE" id="PS00297">
    <property type="entry name" value="HSP70_1"/>
    <property type="match status" value="1"/>
</dbReference>
<dbReference type="PROSITE" id="PS00329">
    <property type="entry name" value="HSP70_2"/>
    <property type="match status" value="1"/>
</dbReference>
<dbReference type="PROSITE" id="PS01036">
    <property type="entry name" value="HSP70_3"/>
    <property type="match status" value="1"/>
</dbReference>
<accession>B5Y242</accession>
<organism>
    <name type="scientific">Klebsiella pneumoniae (strain 342)</name>
    <dbReference type="NCBI Taxonomy" id="507522"/>
    <lineage>
        <taxon>Bacteria</taxon>
        <taxon>Pseudomonadati</taxon>
        <taxon>Pseudomonadota</taxon>
        <taxon>Gammaproteobacteria</taxon>
        <taxon>Enterobacterales</taxon>
        <taxon>Enterobacteriaceae</taxon>
        <taxon>Klebsiella/Raoultella group</taxon>
        <taxon>Klebsiella</taxon>
        <taxon>Klebsiella pneumoniae complex</taxon>
    </lineage>
</organism>
<comment type="function">
    <text evidence="1">Acts as a chaperone.</text>
</comment>
<comment type="induction">
    <text evidence="1">By stress conditions e.g. heat shock.</text>
</comment>
<comment type="similarity">
    <text evidence="1">Belongs to the heat shock protein 70 family.</text>
</comment>
<proteinExistence type="inferred from homology"/>
<feature type="chain" id="PRO_1000119715" description="Chaperone protein DnaK">
    <location>
        <begin position="1"/>
        <end position="638"/>
    </location>
</feature>
<feature type="region of interest" description="Disordered" evidence="2">
    <location>
        <begin position="599"/>
        <end position="638"/>
    </location>
</feature>
<feature type="compositionally biased region" description="Low complexity" evidence="2">
    <location>
        <begin position="602"/>
        <end position="620"/>
    </location>
</feature>
<feature type="modified residue" description="Phosphothreonine; by autocatalysis" evidence="1">
    <location>
        <position position="199"/>
    </location>
</feature>
<reference key="1">
    <citation type="journal article" date="2008" name="PLoS Genet.">
        <title>Complete genome sequence of the N2-fixing broad host range endophyte Klebsiella pneumoniae 342 and virulence predictions verified in mice.</title>
        <authorList>
            <person name="Fouts D.E."/>
            <person name="Tyler H.L."/>
            <person name="DeBoy R.T."/>
            <person name="Daugherty S."/>
            <person name="Ren Q."/>
            <person name="Badger J.H."/>
            <person name="Durkin A.S."/>
            <person name="Huot H."/>
            <person name="Shrivastava S."/>
            <person name="Kothari S."/>
            <person name="Dodson R.J."/>
            <person name="Mohamoud Y."/>
            <person name="Khouri H."/>
            <person name="Roesch L.F.W."/>
            <person name="Krogfelt K.A."/>
            <person name="Struve C."/>
            <person name="Triplett E.W."/>
            <person name="Methe B.A."/>
        </authorList>
    </citation>
    <scope>NUCLEOTIDE SEQUENCE [LARGE SCALE GENOMIC DNA]</scope>
    <source>
        <strain>342</strain>
    </source>
</reference>
<protein>
    <recommendedName>
        <fullName evidence="1">Chaperone protein DnaK</fullName>
    </recommendedName>
    <alternativeName>
        <fullName evidence="1">HSP70</fullName>
    </alternativeName>
    <alternativeName>
        <fullName evidence="1">Heat shock 70 kDa protein</fullName>
    </alternativeName>
    <alternativeName>
        <fullName evidence="1">Heat shock protein 70</fullName>
    </alternativeName>
</protein>
<keyword id="KW-0067">ATP-binding</keyword>
<keyword id="KW-0143">Chaperone</keyword>
<keyword id="KW-0547">Nucleotide-binding</keyword>
<keyword id="KW-0597">Phosphoprotein</keyword>
<keyword id="KW-0346">Stress response</keyword>
<gene>
    <name evidence="1" type="primary">dnaK</name>
    <name type="ordered locus">KPK_4742</name>
</gene>
<sequence>MGKIIGIDLGTTNSCVAIMDGTTARVLENAEGDRTTPSIIAYTQDGETLVGQPAKRQAVTNPQNTLFAIKRLIGRRFQDEEVQRDVSIMPYKIVAADNGDAWLDVKGTKTAPPQISAEVLKKMKKTAEDYLGEPVTEAVITVPAYFNDAQRQATKDAGRIAGLEVKRIINEPTAAALAYGLDKEVGNRTIAVYDLGGGTFDISIIEIDEVDGEKTFEVLATNGDTHLGGEDFDTRLINYLVDEFKKDQGIDLRNDPLAMQRLKEAAEKAKIELSSAQQTDVNLPYITADATGPKHMNIKVTRAKLESLVEDLVNRSIEPLKVALQDAGLSVSDINDVILVGGQTRMPMVQKKVAEFFGKEPRKDVNPDEAVAIGAAVQGGVLTGDVKDVLLLDVTPLSLGIETMGGVMTALINKNTTIPTKHSQVFSTAEDNQSAVTIHVLQGERKRASDNKSLGQFNLDGINPAPRGMPQIEVTFDIDADGILHVSAKDKNSGKEQKITIKASSGLNEEEIQKMVREAEANAESDRKFEELVQTRNQGDHLLHSTRKQVEEAGDKLPADDKTAIESALTALETSLKGEDKADIEAKMQALAQASQKLMEIAQQQHAQQQAGSADAQASNAKDDDVVDAEFEEVKDKK</sequence>